<comment type="function">
    <text evidence="1">Catalyzes the acyloin condensation reaction between C atoms 2 and 3 of pyruvate and glyceraldehyde 3-phosphate to yield 1-deoxy-D-xylulose-5-phosphate (DXP).</text>
</comment>
<comment type="catalytic activity">
    <reaction evidence="1">
        <text>D-glyceraldehyde 3-phosphate + pyruvate + H(+) = 1-deoxy-D-xylulose 5-phosphate + CO2</text>
        <dbReference type="Rhea" id="RHEA:12605"/>
        <dbReference type="ChEBI" id="CHEBI:15361"/>
        <dbReference type="ChEBI" id="CHEBI:15378"/>
        <dbReference type="ChEBI" id="CHEBI:16526"/>
        <dbReference type="ChEBI" id="CHEBI:57792"/>
        <dbReference type="ChEBI" id="CHEBI:59776"/>
        <dbReference type="EC" id="2.2.1.7"/>
    </reaction>
</comment>
<comment type="cofactor">
    <cofactor evidence="1">
        <name>Mg(2+)</name>
        <dbReference type="ChEBI" id="CHEBI:18420"/>
    </cofactor>
    <text evidence="1">Binds 1 Mg(2+) ion per subunit.</text>
</comment>
<comment type="cofactor">
    <cofactor evidence="1">
        <name>thiamine diphosphate</name>
        <dbReference type="ChEBI" id="CHEBI:58937"/>
    </cofactor>
    <text evidence="1">Binds 1 thiamine pyrophosphate per subunit.</text>
</comment>
<comment type="pathway">
    <text evidence="1">Metabolic intermediate biosynthesis; 1-deoxy-D-xylulose 5-phosphate biosynthesis; 1-deoxy-D-xylulose 5-phosphate from D-glyceraldehyde 3-phosphate and pyruvate: step 1/1.</text>
</comment>
<comment type="subunit">
    <text evidence="1">Homodimer.</text>
</comment>
<comment type="similarity">
    <text evidence="1">Belongs to the transketolase family. DXPS subfamily.</text>
</comment>
<reference key="1">
    <citation type="submission" date="2003-06" db="EMBL/GenBank/DDBJ databases">
        <title>The complete genome sequence of Haemophilus ducreyi.</title>
        <authorList>
            <person name="Munson R.S. Jr."/>
            <person name="Ray W.C."/>
            <person name="Mahairas G."/>
            <person name="Sabo P."/>
            <person name="Mungur R."/>
            <person name="Johnson L."/>
            <person name="Nguyen D."/>
            <person name="Wang J."/>
            <person name="Forst C."/>
            <person name="Hood L."/>
        </authorList>
    </citation>
    <scope>NUCLEOTIDE SEQUENCE [LARGE SCALE GENOMIC DNA]</scope>
    <source>
        <strain>35000HP / ATCC 700724</strain>
    </source>
</reference>
<sequence length="617" mass="67873">MQNKYPLLSQIDSPEDLRLLGKEDLSALANELRTYLLDSVSQTSGHLASGLGVVELTVALHYVYQTPFDQLIWDVGHQAYPHKILTGRRDQMHTIRQKNGIHPFPWREESPYDVLSVGHSSTSISAGLGIAVAAQKENAGRKTVCVIGDGAITAGMAFEAMNHAGALHTDMLVILNDNEMSISENVGALNNHLARIFSGSLYTSMRDGSKKVLDKVPTIKNFMKKSEEHMKGVIFSPDSTLFEELGFNYIGPIDGHNIEELVKTLTNMRELKGPQFLHVRTKKGKGYEPAENDPISYHGVPRFDPASGKLPQSKIVPTYSDIFGNWLCEMAENDEKIIGITPAMREGSGMVEFSKRFPTQYFDVAIAEQHAVTFAAGLAIAGYKPVVAIYSTFLQRAYDQLIHDIAIQNLPVIFAIDRAGVVGADGQTHQGAFDLSFMRCIPNMTIMCPADENEMHQMLYTAYKMQTPTAIRYPRGNARGIALQPMAELAVGKARIIHQGKKVAILNFGALLSEAQEVAISHNYTLVDMRFVKPLDKTLISELADSHSLLVTLEENAIQGGAGSAVNEYLQQIGKIKPLVLIGLPDMFIPQSTQQESYADFGLDAKGIDQKIKLALS</sequence>
<accession>Q7VNP7</accession>
<keyword id="KW-0414">Isoprene biosynthesis</keyword>
<keyword id="KW-0460">Magnesium</keyword>
<keyword id="KW-0479">Metal-binding</keyword>
<keyword id="KW-1185">Reference proteome</keyword>
<keyword id="KW-0784">Thiamine biosynthesis</keyword>
<keyword id="KW-0786">Thiamine pyrophosphate</keyword>
<keyword id="KW-0808">Transferase</keyword>
<gene>
    <name evidence="1" type="primary">dxs</name>
    <name type="ordered locus">HD_0441</name>
</gene>
<proteinExistence type="inferred from homology"/>
<protein>
    <recommendedName>
        <fullName evidence="1">1-deoxy-D-xylulose-5-phosphate synthase</fullName>
        <ecNumber evidence="1">2.2.1.7</ecNumber>
    </recommendedName>
    <alternativeName>
        <fullName evidence="1">1-deoxyxylulose-5-phosphate synthase</fullName>
        <shortName evidence="1">DXP synthase</shortName>
        <shortName evidence="1">DXPS</shortName>
    </alternativeName>
</protein>
<evidence type="ECO:0000255" key="1">
    <source>
        <dbReference type="HAMAP-Rule" id="MF_00315"/>
    </source>
</evidence>
<name>DXS_HAEDU</name>
<dbReference type="EC" id="2.2.1.7" evidence="1"/>
<dbReference type="EMBL" id="AE017143">
    <property type="protein sequence ID" value="AAP95405.1"/>
    <property type="molecule type" value="Genomic_DNA"/>
</dbReference>
<dbReference type="RefSeq" id="WP_010944458.1">
    <property type="nucleotide sequence ID" value="NC_002940.2"/>
</dbReference>
<dbReference type="SMR" id="Q7VNP7"/>
<dbReference type="STRING" id="233412.HD_0441"/>
<dbReference type="KEGG" id="hdu:HD_0441"/>
<dbReference type="eggNOG" id="COG1154">
    <property type="taxonomic scope" value="Bacteria"/>
</dbReference>
<dbReference type="HOGENOM" id="CLU_009227_1_4_6"/>
<dbReference type="OrthoDB" id="9803371at2"/>
<dbReference type="UniPathway" id="UPA00064">
    <property type="reaction ID" value="UER00091"/>
</dbReference>
<dbReference type="Proteomes" id="UP000001022">
    <property type="component" value="Chromosome"/>
</dbReference>
<dbReference type="GO" id="GO:0005829">
    <property type="term" value="C:cytosol"/>
    <property type="evidence" value="ECO:0007669"/>
    <property type="project" value="TreeGrafter"/>
</dbReference>
<dbReference type="GO" id="GO:0008661">
    <property type="term" value="F:1-deoxy-D-xylulose-5-phosphate synthase activity"/>
    <property type="evidence" value="ECO:0007669"/>
    <property type="project" value="UniProtKB-UniRule"/>
</dbReference>
<dbReference type="GO" id="GO:0000287">
    <property type="term" value="F:magnesium ion binding"/>
    <property type="evidence" value="ECO:0007669"/>
    <property type="project" value="UniProtKB-UniRule"/>
</dbReference>
<dbReference type="GO" id="GO:0030976">
    <property type="term" value="F:thiamine pyrophosphate binding"/>
    <property type="evidence" value="ECO:0007669"/>
    <property type="project" value="UniProtKB-UniRule"/>
</dbReference>
<dbReference type="GO" id="GO:0052865">
    <property type="term" value="P:1-deoxy-D-xylulose 5-phosphate biosynthetic process"/>
    <property type="evidence" value="ECO:0007669"/>
    <property type="project" value="UniProtKB-UniPathway"/>
</dbReference>
<dbReference type="GO" id="GO:0019288">
    <property type="term" value="P:isopentenyl diphosphate biosynthetic process, methylerythritol 4-phosphate pathway"/>
    <property type="evidence" value="ECO:0007669"/>
    <property type="project" value="TreeGrafter"/>
</dbReference>
<dbReference type="GO" id="GO:0016114">
    <property type="term" value="P:terpenoid biosynthetic process"/>
    <property type="evidence" value="ECO:0007669"/>
    <property type="project" value="UniProtKB-UniRule"/>
</dbReference>
<dbReference type="GO" id="GO:0009228">
    <property type="term" value="P:thiamine biosynthetic process"/>
    <property type="evidence" value="ECO:0007669"/>
    <property type="project" value="UniProtKB-UniRule"/>
</dbReference>
<dbReference type="CDD" id="cd02007">
    <property type="entry name" value="TPP_DXS"/>
    <property type="match status" value="1"/>
</dbReference>
<dbReference type="CDD" id="cd07033">
    <property type="entry name" value="TPP_PYR_DXS_TK_like"/>
    <property type="match status" value="1"/>
</dbReference>
<dbReference type="FunFam" id="3.40.50.920:FF:000002">
    <property type="entry name" value="1-deoxy-D-xylulose-5-phosphate synthase"/>
    <property type="match status" value="1"/>
</dbReference>
<dbReference type="FunFam" id="3.40.50.970:FF:000005">
    <property type="entry name" value="1-deoxy-D-xylulose-5-phosphate synthase"/>
    <property type="match status" value="1"/>
</dbReference>
<dbReference type="Gene3D" id="3.40.50.920">
    <property type="match status" value="1"/>
</dbReference>
<dbReference type="Gene3D" id="3.40.50.970">
    <property type="match status" value="2"/>
</dbReference>
<dbReference type="HAMAP" id="MF_00315">
    <property type="entry name" value="DXP_synth"/>
    <property type="match status" value="1"/>
</dbReference>
<dbReference type="InterPro" id="IPR005477">
    <property type="entry name" value="Dxylulose-5-P_synthase"/>
</dbReference>
<dbReference type="InterPro" id="IPR029061">
    <property type="entry name" value="THDP-binding"/>
</dbReference>
<dbReference type="InterPro" id="IPR009014">
    <property type="entry name" value="Transketo_C/PFOR_II"/>
</dbReference>
<dbReference type="InterPro" id="IPR005475">
    <property type="entry name" value="Transketolase-like_Pyr-bd"/>
</dbReference>
<dbReference type="InterPro" id="IPR020826">
    <property type="entry name" value="Transketolase_BS"/>
</dbReference>
<dbReference type="InterPro" id="IPR033248">
    <property type="entry name" value="Transketolase_C"/>
</dbReference>
<dbReference type="InterPro" id="IPR049557">
    <property type="entry name" value="Transketolase_CS"/>
</dbReference>
<dbReference type="NCBIfam" id="TIGR00204">
    <property type="entry name" value="dxs"/>
    <property type="match status" value="1"/>
</dbReference>
<dbReference type="NCBIfam" id="NF003933">
    <property type="entry name" value="PRK05444.2-2"/>
    <property type="match status" value="1"/>
</dbReference>
<dbReference type="PANTHER" id="PTHR43322">
    <property type="entry name" value="1-D-DEOXYXYLULOSE 5-PHOSPHATE SYNTHASE-RELATED"/>
    <property type="match status" value="1"/>
</dbReference>
<dbReference type="PANTHER" id="PTHR43322:SF5">
    <property type="entry name" value="1-DEOXY-D-XYLULOSE-5-PHOSPHATE SYNTHASE, CHLOROPLASTIC"/>
    <property type="match status" value="1"/>
</dbReference>
<dbReference type="Pfam" id="PF13292">
    <property type="entry name" value="DXP_synthase_N"/>
    <property type="match status" value="1"/>
</dbReference>
<dbReference type="Pfam" id="PF02779">
    <property type="entry name" value="Transket_pyr"/>
    <property type="match status" value="1"/>
</dbReference>
<dbReference type="Pfam" id="PF02780">
    <property type="entry name" value="Transketolase_C"/>
    <property type="match status" value="1"/>
</dbReference>
<dbReference type="SMART" id="SM00861">
    <property type="entry name" value="Transket_pyr"/>
    <property type="match status" value="1"/>
</dbReference>
<dbReference type="SUPFAM" id="SSF52518">
    <property type="entry name" value="Thiamin diphosphate-binding fold (THDP-binding)"/>
    <property type="match status" value="2"/>
</dbReference>
<dbReference type="SUPFAM" id="SSF52922">
    <property type="entry name" value="TK C-terminal domain-like"/>
    <property type="match status" value="1"/>
</dbReference>
<dbReference type="PROSITE" id="PS00801">
    <property type="entry name" value="TRANSKETOLASE_1"/>
    <property type="match status" value="1"/>
</dbReference>
<dbReference type="PROSITE" id="PS00802">
    <property type="entry name" value="TRANSKETOLASE_2"/>
    <property type="match status" value="1"/>
</dbReference>
<organism>
    <name type="scientific">Haemophilus ducreyi (strain 35000HP / ATCC 700724)</name>
    <dbReference type="NCBI Taxonomy" id="233412"/>
    <lineage>
        <taxon>Bacteria</taxon>
        <taxon>Pseudomonadati</taxon>
        <taxon>Pseudomonadota</taxon>
        <taxon>Gammaproteobacteria</taxon>
        <taxon>Pasteurellales</taxon>
        <taxon>Pasteurellaceae</taxon>
        <taxon>Haemophilus</taxon>
    </lineage>
</organism>
<feature type="chain" id="PRO_0000189116" description="1-deoxy-D-xylulose-5-phosphate synthase">
    <location>
        <begin position="1"/>
        <end position="617"/>
    </location>
</feature>
<feature type="binding site" evidence="1">
    <location>
        <position position="77"/>
    </location>
    <ligand>
        <name>thiamine diphosphate</name>
        <dbReference type="ChEBI" id="CHEBI:58937"/>
    </ligand>
</feature>
<feature type="binding site" evidence="1">
    <location>
        <begin position="118"/>
        <end position="120"/>
    </location>
    <ligand>
        <name>thiamine diphosphate</name>
        <dbReference type="ChEBI" id="CHEBI:58937"/>
    </ligand>
</feature>
<feature type="binding site" evidence="1">
    <location>
        <position position="149"/>
    </location>
    <ligand>
        <name>Mg(2+)</name>
        <dbReference type="ChEBI" id="CHEBI:18420"/>
    </ligand>
</feature>
<feature type="binding site" evidence="1">
    <location>
        <begin position="150"/>
        <end position="151"/>
    </location>
    <ligand>
        <name>thiamine diphosphate</name>
        <dbReference type="ChEBI" id="CHEBI:58937"/>
    </ligand>
</feature>
<feature type="binding site" evidence="1">
    <location>
        <position position="178"/>
    </location>
    <ligand>
        <name>Mg(2+)</name>
        <dbReference type="ChEBI" id="CHEBI:18420"/>
    </ligand>
</feature>
<feature type="binding site" evidence="1">
    <location>
        <position position="178"/>
    </location>
    <ligand>
        <name>thiamine diphosphate</name>
        <dbReference type="ChEBI" id="CHEBI:58937"/>
    </ligand>
</feature>
<feature type="binding site" evidence="1">
    <location>
        <position position="287"/>
    </location>
    <ligand>
        <name>thiamine diphosphate</name>
        <dbReference type="ChEBI" id="CHEBI:58937"/>
    </ligand>
</feature>
<feature type="binding site" evidence="1">
    <location>
        <position position="368"/>
    </location>
    <ligand>
        <name>thiamine diphosphate</name>
        <dbReference type="ChEBI" id="CHEBI:58937"/>
    </ligand>
</feature>